<dbReference type="EC" id="4.4.1.21" evidence="1"/>
<dbReference type="EMBL" id="CP000513">
    <property type="protein sequence ID" value="ABQ13961.1"/>
    <property type="molecule type" value="Genomic_DNA"/>
</dbReference>
<dbReference type="RefSeq" id="WP_012030736.1">
    <property type="nucleotide sequence ID" value="NC_009446.1"/>
</dbReference>
<dbReference type="SMR" id="A5EVY3"/>
<dbReference type="STRING" id="246195.DNO_0395"/>
<dbReference type="KEGG" id="dno:DNO_0395"/>
<dbReference type="eggNOG" id="COG1854">
    <property type="taxonomic scope" value="Bacteria"/>
</dbReference>
<dbReference type="HOGENOM" id="CLU_107531_2_0_6"/>
<dbReference type="OrthoDB" id="9788129at2"/>
<dbReference type="Proteomes" id="UP000000248">
    <property type="component" value="Chromosome"/>
</dbReference>
<dbReference type="GO" id="GO:0005506">
    <property type="term" value="F:iron ion binding"/>
    <property type="evidence" value="ECO:0007669"/>
    <property type="project" value="InterPro"/>
</dbReference>
<dbReference type="GO" id="GO:0043768">
    <property type="term" value="F:S-ribosylhomocysteine lyase activity"/>
    <property type="evidence" value="ECO:0007669"/>
    <property type="project" value="UniProtKB-UniRule"/>
</dbReference>
<dbReference type="GO" id="GO:0009372">
    <property type="term" value="P:quorum sensing"/>
    <property type="evidence" value="ECO:0007669"/>
    <property type="project" value="UniProtKB-UniRule"/>
</dbReference>
<dbReference type="Gene3D" id="3.30.1360.80">
    <property type="entry name" value="S-ribosylhomocysteinase (LuxS)"/>
    <property type="match status" value="1"/>
</dbReference>
<dbReference type="HAMAP" id="MF_00091">
    <property type="entry name" value="LuxS"/>
    <property type="match status" value="1"/>
</dbReference>
<dbReference type="InterPro" id="IPR037005">
    <property type="entry name" value="LuxS_sf"/>
</dbReference>
<dbReference type="InterPro" id="IPR011249">
    <property type="entry name" value="Metalloenz_LuxS/M16"/>
</dbReference>
<dbReference type="InterPro" id="IPR003815">
    <property type="entry name" value="S-ribosylhomocysteinase"/>
</dbReference>
<dbReference type="NCBIfam" id="NF002604">
    <property type="entry name" value="PRK02260.1-4"/>
    <property type="match status" value="1"/>
</dbReference>
<dbReference type="PANTHER" id="PTHR35799">
    <property type="entry name" value="S-RIBOSYLHOMOCYSTEINE LYASE"/>
    <property type="match status" value="1"/>
</dbReference>
<dbReference type="PANTHER" id="PTHR35799:SF1">
    <property type="entry name" value="S-RIBOSYLHOMOCYSTEINE LYASE"/>
    <property type="match status" value="1"/>
</dbReference>
<dbReference type="Pfam" id="PF02664">
    <property type="entry name" value="LuxS"/>
    <property type="match status" value="1"/>
</dbReference>
<dbReference type="PIRSF" id="PIRSF006160">
    <property type="entry name" value="AI2"/>
    <property type="match status" value="1"/>
</dbReference>
<dbReference type="PRINTS" id="PR01487">
    <property type="entry name" value="LUXSPROTEIN"/>
</dbReference>
<dbReference type="SUPFAM" id="SSF63411">
    <property type="entry name" value="LuxS/MPP-like metallohydrolase"/>
    <property type="match status" value="1"/>
</dbReference>
<keyword id="KW-0071">Autoinducer synthesis</keyword>
<keyword id="KW-0408">Iron</keyword>
<keyword id="KW-0456">Lyase</keyword>
<keyword id="KW-0479">Metal-binding</keyword>
<keyword id="KW-0673">Quorum sensing</keyword>
<keyword id="KW-1185">Reference proteome</keyword>
<gene>
    <name evidence="1" type="primary">luxS</name>
    <name type="ordered locus">DNO_0395</name>
</gene>
<evidence type="ECO:0000255" key="1">
    <source>
        <dbReference type="HAMAP-Rule" id="MF_00091"/>
    </source>
</evidence>
<reference key="1">
    <citation type="journal article" date="2007" name="Nat. Biotechnol.">
        <title>Genome sequence and identification of candidate vaccine antigens from the animal pathogen Dichelobacter nodosus.</title>
        <authorList>
            <person name="Myers G.S.A."/>
            <person name="Parker D."/>
            <person name="Al-Hasani K."/>
            <person name="Kennan R.M."/>
            <person name="Seemann T."/>
            <person name="Ren Q."/>
            <person name="Badger J.H."/>
            <person name="Selengut J.D."/>
            <person name="Deboy R.T."/>
            <person name="Tettelin H."/>
            <person name="Boyce J.D."/>
            <person name="McCarl V.P."/>
            <person name="Han X."/>
            <person name="Nelson W.C."/>
            <person name="Madupu R."/>
            <person name="Mohamoud Y."/>
            <person name="Holley T."/>
            <person name="Fedorova N."/>
            <person name="Khouri H."/>
            <person name="Bottomley S.P."/>
            <person name="Whittington R.J."/>
            <person name="Adler B."/>
            <person name="Songer J.G."/>
            <person name="Rood J.I."/>
            <person name="Paulsen I.T."/>
        </authorList>
    </citation>
    <scope>NUCLEOTIDE SEQUENCE [LARGE SCALE GENOMIC DNA]</scope>
    <source>
        <strain>VCS1703A</strain>
    </source>
</reference>
<sequence length="154" mass="17535">MERKHMNVASFNLDHNAVKAPYVRLADKKIGSHGDVIYKYDIRVCQPNREQMLMPALHSLEHLLAELMRNHSDKILDISPMGCQTGFYISLLNEPDYQVMLHLLETTLNDILAAEAVPACCEEQCGFAANHSLSGAQEIARYLLAHRNKWEQVF</sequence>
<protein>
    <recommendedName>
        <fullName evidence="1">S-ribosylhomocysteine lyase</fullName>
        <ecNumber evidence="1">4.4.1.21</ecNumber>
    </recommendedName>
    <alternativeName>
        <fullName evidence="1">AI-2 synthesis protein</fullName>
    </alternativeName>
    <alternativeName>
        <fullName evidence="1">Autoinducer-2 production protein LuxS</fullName>
    </alternativeName>
</protein>
<comment type="function">
    <text evidence="1">Involved in the synthesis of autoinducer 2 (AI-2) which is secreted by bacteria and is used to communicate both the cell density and the metabolic potential of the environment. The regulation of gene expression in response to changes in cell density is called quorum sensing. Catalyzes the transformation of S-ribosylhomocysteine (RHC) to homocysteine (HC) and 4,5-dihydroxy-2,3-pentadione (DPD).</text>
</comment>
<comment type="catalytic activity">
    <reaction evidence="1">
        <text>S-(5-deoxy-D-ribos-5-yl)-L-homocysteine = (S)-4,5-dihydroxypentane-2,3-dione + L-homocysteine</text>
        <dbReference type="Rhea" id="RHEA:17753"/>
        <dbReference type="ChEBI" id="CHEBI:29484"/>
        <dbReference type="ChEBI" id="CHEBI:58195"/>
        <dbReference type="ChEBI" id="CHEBI:58199"/>
        <dbReference type="EC" id="4.4.1.21"/>
    </reaction>
</comment>
<comment type="cofactor">
    <cofactor evidence="1">
        <name>Fe cation</name>
        <dbReference type="ChEBI" id="CHEBI:24875"/>
    </cofactor>
    <text evidence="1">Binds 1 Fe cation per subunit.</text>
</comment>
<comment type="subunit">
    <text evidence="1">Homodimer.</text>
</comment>
<comment type="similarity">
    <text evidence="1">Belongs to the LuxS family.</text>
</comment>
<name>LUXS_DICNV</name>
<organism>
    <name type="scientific">Dichelobacter nodosus (strain VCS1703A)</name>
    <dbReference type="NCBI Taxonomy" id="246195"/>
    <lineage>
        <taxon>Bacteria</taxon>
        <taxon>Pseudomonadati</taxon>
        <taxon>Pseudomonadota</taxon>
        <taxon>Gammaproteobacteria</taxon>
        <taxon>Cardiobacteriales</taxon>
        <taxon>Cardiobacteriaceae</taxon>
        <taxon>Dichelobacter</taxon>
    </lineage>
</organism>
<accession>A5EVY3</accession>
<proteinExistence type="inferred from homology"/>
<feature type="chain" id="PRO_0000297994" description="S-ribosylhomocysteine lyase">
    <location>
        <begin position="1"/>
        <end position="154"/>
    </location>
</feature>
<feature type="binding site" evidence="1">
    <location>
        <position position="58"/>
    </location>
    <ligand>
        <name>Fe cation</name>
        <dbReference type="ChEBI" id="CHEBI:24875"/>
    </ligand>
</feature>
<feature type="binding site" evidence="1">
    <location>
        <position position="62"/>
    </location>
    <ligand>
        <name>Fe cation</name>
        <dbReference type="ChEBI" id="CHEBI:24875"/>
    </ligand>
</feature>
<feature type="binding site" evidence="1">
    <location>
        <position position="125"/>
    </location>
    <ligand>
        <name>Fe cation</name>
        <dbReference type="ChEBI" id="CHEBI:24875"/>
    </ligand>
</feature>